<keyword id="KW-0687">Ribonucleoprotein</keyword>
<keyword id="KW-0689">Ribosomal protein</keyword>
<keyword id="KW-0694">RNA-binding</keyword>
<keyword id="KW-0699">rRNA-binding</keyword>
<organism>
    <name type="scientific">Yersinia pseudotuberculosis serotype O:3 (strain YPIII)</name>
    <dbReference type="NCBI Taxonomy" id="502800"/>
    <lineage>
        <taxon>Bacteria</taxon>
        <taxon>Pseudomonadati</taxon>
        <taxon>Pseudomonadota</taxon>
        <taxon>Gammaproteobacteria</taxon>
        <taxon>Enterobacterales</taxon>
        <taxon>Yersiniaceae</taxon>
        <taxon>Yersinia</taxon>
    </lineage>
</organism>
<proteinExistence type="inferred from homology"/>
<name>RS15_YERPY</name>
<comment type="function">
    <text evidence="1">One of the primary rRNA binding proteins, it binds directly to 16S rRNA where it helps nucleate assembly of the platform of the 30S subunit by binding and bridging several RNA helices of the 16S rRNA.</text>
</comment>
<comment type="function">
    <text evidence="1">Forms an intersubunit bridge (bridge B4) with the 23S rRNA of the 50S subunit in the ribosome.</text>
</comment>
<comment type="subunit">
    <text evidence="1">Part of the 30S ribosomal subunit. Forms a bridge to the 50S subunit in the 70S ribosome, contacting the 23S rRNA.</text>
</comment>
<comment type="similarity">
    <text evidence="1">Belongs to the universal ribosomal protein uS15 family.</text>
</comment>
<feature type="chain" id="PRO_1000143199" description="Small ribosomal subunit protein uS15">
    <location>
        <begin position="1"/>
        <end position="89"/>
    </location>
</feature>
<dbReference type="EMBL" id="CP000950">
    <property type="protein sequence ID" value="ACA69994.1"/>
    <property type="molecule type" value="Genomic_DNA"/>
</dbReference>
<dbReference type="RefSeq" id="WP_002209257.1">
    <property type="nucleotide sequence ID" value="NZ_CP009792.1"/>
</dbReference>
<dbReference type="SMR" id="B1JLX7"/>
<dbReference type="GeneID" id="96663990"/>
<dbReference type="KEGG" id="ypy:YPK_3727"/>
<dbReference type="PATRIC" id="fig|502800.11.peg.75"/>
<dbReference type="GO" id="GO:0022627">
    <property type="term" value="C:cytosolic small ribosomal subunit"/>
    <property type="evidence" value="ECO:0007669"/>
    <property type="project" value="TreeGrafter"/>
</dbReference>
<dbReference type="GO" id="GO:0019843">
    <property type="term" value="F:rRNA binding"/>
    <property type="evidence" value="ECO:0007669"/>
    <property type="project" value="UniProtKB-UniRule"/>
</dbReference>
<dbReference type="GO" id="GO:0003735">
    <property type="term" value="F:structural constituent of ribosome"/>
    <property type="evidence" value="ECO:0007669"/>
    <property type="project" value="InterPro"/>
</dbReference>
<dbReference type="GO" id="GO:0006412">
    <property type="term" value="P:translation"/>
    <property type="evidence" value="ECO:0007669"/>
    <property type="project" value="UniProtKB-UniRule"/>
</dbReference>
<dbReference type="CDD" id="cd00353">
    <property type="entry name" value="Ribosomal_S15p_S13e"/>
    <property type="match status" value="1"/>
</dbReference>
<dbReference type="FunFam" id="1.10.287.10:FF:000002">
    <property type="entry name" value="30S ribosomal protein S15"/>
    <property type="match status" value="1"/>
</dbReference>
<dbReference type="Gene3D" id="6.10.250.3130">
    <property type="match status" value="1"/>
</dbReference>
<dbReference type="Gene3D" id="1.10.287.10">
    <property type="entry name" value="S15/NS1, RNA-binding"/>
    <property type="match status" value="1"/>
</dbReference>
<dbReference type="HAMAP" id="MF_01343_B">
    <property type="entry name" value="Ribosomal_uS15_B"/>
    <property type="match status" value="1"/>
</dbReference>
<dbReference type="InterPro" id="IPR000589">
    <property type="entry name" value="Ribosomal_uS15"/>
</dbReference>
<dbReference type="InterPro" id="IPR005290">
    <property type="entry name" value="Ribosomal_uS15_bac-type"/>
</dbReference>
<dbReference type="InterPro" id="IPR009068">
    <property type="entry name" value="uS15_NS1_RNA-bd_sf"/>
</dbReference>
<dbReference type="NCBIfam" id="TIGR00952">
    <property type="entry name" value="S15_bact"/>
    <property type="match status" value="1"/>
</dbReference>
<dbReference type="PANTHER" id="PTHR23321">
    <property type="entry name" value="RIBOSOMAL PROTEIN S15, BACTERIAL AND ORGANELLAR"/>
    <property type="match status" value="1"/>
</dbReference>
<dbReference type="PANTHER" id="PTHR23321:SF26">
    <property type="entry name" value="SMALL RIBOSOMAL SUBUNIT PROTEIN US15M"/>
    <property type="match status" value="1"/>
</dbReference>
<dbReference type="Pfam" id="PF00312">
    <property type="entry name" value="Ribosomal_S15"/>
    <property type="match status" value="1"/>
</dbReference>
<dbReference type="SMART" id="SM01387">
    <property type="entry name" value="Ribosomal_S15"/>
    <property type="match status" value="1"/>
</dbReference>
<dbReference type="SUPFAM" id="SSF47060">
    <property type="entry name" value="S15/NS1 RNA-binding domain"/>
    <property type="match status" value="1"/>
</dbReference>
<dbReference type="PROSITE" id="PS00362">
    <property type="entry name" value="RIBOSOMAL_S15"/>
    <property type="match status" value="1"/>
</dbReference>
<accession>B1JLX7</accession>
<protein>
    <recommendedName>
        <fullName evidence="1">Small ribosomal subunit protein uS15</fullName>
    </recommendedName>
    <alternativeName>
        <fullName evidence="2">30S ribosomal protein S15</fullName>
    </alternativeName>
</protein>
<reference key="1">
    <citation type="submission" date="2008-02" db="EMBL/GenBank/DDBJ databases">
        <title>Complete sequence of Yersinia pseudotuberculosis YPIII.</title>
        <authorList>
            <consortium name="US DOE Joint Genome Institute"/>
            <person name="Copeland A."/>
            <person name="Lucas S."/>
            <person name="Lapidus A."/>
            <person name="Glavina del Rio T."/>
            <person name="Dalin E."/>
            <person name="Tice H."/>
            <person name="Bruce D."/>
            <person name="Goodwin L."/>
            <person name="Pitluck S."/>
            <person name="Munk A.C."/>
            <person name="Brettin T."/>
            <person name="Detter J.C."/>
            <person name="Han C."/>
            <person name="Tapia R."/>
            <person name="Schmutz J."/>
            <person name="Larimer F."/>
            <person name="Land M."/>
            <person name="Hauser L."/>
            <person name="Challacombe J.F."/>
            <person name="Green L."/>
            <person name="Lindler L.E."/>
            <person name="Nikolich M.P."/>
            <person name="Richardson P."/>
        </authorList>
    </citation>
    <scope>NUCLEOTIDE SEQUENCE [LARGE SCALE GENOMIC DNA]</scope>
    <source>
        <strain>YPIII</strain>
    </source>
</reference>
<sequence>MSLSVEAKAKIVADFGRGTNDTGSSEVQVALLTAQINHLQGHFSEHKKDHHSRRGLLRMVSTRRKLLDYLKRQDVARYASLIERLGLRR</sequence>
<evidence type="ECO:0000255" key="1">
    <source>
        <dbReference type="HAMAP-Rule" id="MF_01343"/>
    </source>
</evidence>
<evidence type="ECO:0000305" key="2"/>
<gene>
    <name evidence="1" type="primary">rpsO</name>
    <name type="ordered locus">YPK_3727</name>
</gene>